<accession>B9KJ19</accession>
<organism>
    <name type="scientific">Anaplasma marginale (strain Florida)</name>
    <dbReference type="NCBI Taxonomy" id="320483"/>
    <lineage>
        <taxon>Bacteria</taxon>
        <taxon>Pseudomonadati</taxon>
        <taxon>Pseudomonadota</taxon>
        <taxon>Alphaproteobacteria</taxon>
        <taxon>Rickettsiales</taxon>
        <taxon>Anaplasmataceae</taxon>
        <taxon>Anaplasma</taxon>
    </lineage>
</organism>
<comment type="function">
    <text evidence="1">An essential GTPase which binds GTP, GDP and possibly (p)ppGpp with moderate affinity, with high nucleotide exchange rates and a fairly low GTP hydrolysis rate. Plays a role in control of the cell cycle, stress response, ribosome biogenesis and in those bacteria that undergo differentiation, in morphogenesis control.</text>
</comment>
<comment type="cofactor">
    <cofactor evidence="1">
        <name>Mg(2+)</name>
        <dbReference type="ChEBI" id="CHEBI:18420"/>
    </cofactor>
</comment>
<comment type="subunit">
    <text evidence="1">Monomer.</text>
</comment>
<comment type="subcellular location">
    <subcellularLocation>
        <location evidence="1">Cytoplasm</location>
    </subcellularLocation>
</comment>
<comment type="similarity">
    <text evidence="1">Belongs to the TRAFAC class OBG-HflX-like GTPase superfamily. OBG GTPase family.</text>
</comment>
<name>OBG2_ANAMF</name>
<proteinExistence type="inferred from homology"/>
<feature type="chain" id="PRO_0000385696" description="GTPase Obg 2">
    <location>
        <begin position="1"/>
        <end position="328"/>
    </location>
</feature>
<feature type="domain" description="Obg" evidence="2">
    <location>
        <begin position="1"/>
        <end position="139"/>
    </location>
</feature>
<feature type="domain" description="OBG-type G" evidence="1">
    <location>
        <begin position="140"/>
        <end position="309"/>
    </location>
</feature>
<feature type="binding site" evidence="1">
    <location>
        <begin position="146"/>
        <end position="153"/>
    </location>
    <ligand>
        <name>GTP</name>
        <dbReference type="ChEBI" id="CHEBI:37565"/>
    </ligand>
</feature>
<feature type="binding site" evidence="1">
    <location>
        <position position="153"/>
    </location>
    <ligand>
        <name>Mg(2+)</name>
        <dbReference type="ChEBI" id="CHEBI:18420"/>
    </ligand>
</feature>
<feature type="binding site" evidence="1">
    <location>
        <begin position="171"/>
        <end position="175"/>
    </location>
    <ligand>
        <name>GTP</name>
        <dbReference type="ChEBI" id="CHEBI:37565"/>
    </ligand>
</feature>
<feature type="binding site" evidence="1">
    <location>
        <position position="173"/>
    </location>
    <ligand>
        <name>Mg(2+)</name>
        <dbReference type="ChEBI" id="CHEBI:18420"/>
    </ligand>
</feature>
<feature type="binding site" evidence="1">
    <location>
        <begin position="192"/>
        <end position="195"/>
    </location>
    <ligand>
        <name>GTP</name>
        <dbReference type="ChEBI" id="CHEBI:37565"/>
    </ligand>
</feature>
<feature type="binding site" evidence="1">
    <location>
        <begin position="259"/>
        <end position="262"/>
    </location>
    <ligand>
        <name>GTP</name>
        <dbReference type="ChEBI" id="CHEBI:37565"/>
    </ligand>
</feature>
<feature type="binding site" evidence="1">
    <location>
        <begin position="290"/>
        <end position="292"/>
    </location>
    <ligand>
        <name>GTP</name>
        <dbReference type="ChEBI" id="CHEBI:37565"/>
    </ligand>
</feature>
<reference key="1">
    <citation type="journal article" date="2009" name="BMC Genomics">
        <title>Conservation in the face of diversity: multistrain analysis of an intracellular bacterium.</title>
        <authorList>
            <person name="Dark M.J."/>
            <person name="Herndon D.R."/>
            <person name="Kappmeyer L.S."/>
            <person name="Gonzales M.P."/>
            <person name="Nordeen E."/>
            <person name="Palmer G.H."/>
            <person name="Knowles D.P. Jr."/>
            <person name="Brayton K.A."/>
        </authorList>
    </citation>
    <scope>NUCLEOTIDE SEQUENCE [LARGE SCALE GENOMIC DNA]</scope>
    <source>
        <strain>Florida</strain>
    </source>
</reference>
<protein>
    <recommendedName>
        <fullName evidence="1">GTPase Obg 2</fullName>
        <ecNumber evidence="1">3.6.5.-</ecNumber>
    </recommendedName>
    <alternativeName>
        <fullName evidence="1">GTP-binding protein Obg 2</fullName>
    </alternativeName>
</protein>
<evidence type="ECO:0000255" key="1">
    <source>
        <dbReference type="HAMAP-Rule" id="MF_01454"/>
    </source>
</evidence>
<evidence type="ECO:0000255" key="2">
    <source>
        <dbReference type="PROSITE-ProRule" id="PRU01231"/>
    </source>
</evidence>
<sequence length="328" mass="35457">MSFRREKFIEFGGPDGGNGGNGGSVIFVASSAVNTLLYFRYNQHIRAENGKAGSGKGKFGAAGRNRVVEVPVGTQLYDEDGNTLIADLNNIGQQYTVAAGGRGGIGNAQYKSSTNRAPTYFTYGTLGEEHCVLLKLKIVSDVGIIGMPNAGKSSLLSRCTASKTKVSDYPFTTLEPHLGVAYANGCELVLADIPGLIENASSGAGLGHKFLKHIERCVILLHLVDCSLPDIVSAYELVRQELKLHSQELTGKQEVVILNKCDLLSEGEVREKQKLLESSTKKEVITLSMGDELDSLIVFLHAQVKKAVVTEPSDTSFDPFLYVHYNKK</sequence>
<gene>
    <name evidence="1" type="primary">obg2</name>
    <name type="ordered locus">AMF_642</name>
</gene>
<keyword id="KW-0963">Cytoplasm</keyword>
<keyword id="KW-0342">GTP-binding</keyword>
<keyword id="KW-0378">Hydrolase</keyword>
<keyword id="KW-0460">Magnesium</keyword>
<keyword id="KW-0479">Metal-binding</keyword>
<keyword id="KW-0547">Nucleotide-binding</keyword>
<keyword id="KW-1185">Reference proteome</keyword>
<dbReference type="EC" id="3.6.5.-" evidence="1"/>
<dbReference type="EMBL" id="CP001079">
    <property type="protein sequence ID" value="ACM49481.1"/>
    <property type="molecule type" value="Genomic_DNA"/>
</dbReference>
<dbReference type="SMR" id="B9KJ19"/>
<dbReference type="STRING" id="320483.AMF_642"/>
<dbReference type="KEGG" id="amf:AMF_642"/>
<dbReference type="PATRIC" id="fig|320483.3.peg.736"/>
<dbReference type="eggNOG" id="COG0536">
    <property type="taxonomic scope" value="Bacteria"/>
</dbReference>
<dbReference type="HOGENOM" id="CLU_011747_2_0_5"/>
<dbReference type="Proteomes" id="UP000007307">
    <property type="component" value="Chromosome"/>
</dbReference>
<dbReference type="GO" id="GO:0005737">
    <property type="term" value="C:cytoplasm"/>
    <property type="evidence" value="ECO:0007669"/>
    <property type="project" value="UniProtKB-SubCell"/>
</dbReference>
<dbReference type="GO" id="GO:0005525">
    <property type="term" value="F:GTP binding"/>
    <property type="evidence" value="ECO:0007669"/>
    <property type="project" value="UniProtKB-UniRule"/>
</dbReference>
<dbReference type="GO" id="GO:0003924">
    <property type="term" value="F:GTPase activity"/>
    <property type="evidence" value="ECO:0007669"/>
    <property type="project" value="UniProtKB-UniRule"/>
</dbReference>
<dbReference type="GO" id="GO:0000287">
    <property type="term" value="F:magnesium ion binding"/>
    <property type="evidence" value="ECO:0007669"/>
    <property type="project" value="InterPro"/>
</dbReference>
<dbReference type="GO" id="GO:0042254">
    <property type="term" value="P:ribosome biogenesis"/>
    <property type="evidence" value="ECO:0007669"/>
    <property type="project" value="UniProtKB-UniRule"/>
</dbReference>
<dbReference type="CDD" id="cd01898">
    <property type="entry name" value="Obg"/>
    <property type="match status" value="1"/>
</dbReference>
<dbReference type="FunFam" id="2.70.210.12:FF:000001">
    <property type="entry name" value="GTPase Obg"/>
    <property type="match status" value="1"/>
</dbReference>
<dbReference type="Gene3D" id="2.70.210.12">
    <property type="entry name" value="GTP1/OBG domain"/>
    <property type="match status" value="1"/>
</dbReference>
<dbReference type="Gene3D" id="3.40.50.300">
    <property type="entry name" value="P-loop containing nucleotide triphosphate hydrolases"/>
    <property type="match status" value="1"/>
</dbReference>
<dbReference type="HAMAP" id="MF_01454">
    <property type="entry name" value="GTPase_Obg"/>
    <property type="match status" value="1"/>
</dbReference>
<dbReference type="InterPro" id="IPR031167">
    <property type="entry name" value="G_OBG"/>
</dbReference>
<dbReference type="InterPro" id="IPR006073">
    <property type="entry name" value="GTP-bd"/>
</dbReference>
<dbReference type="InterPro" id="IPR014100">
    <property type="entry name" value="GTP-bd_Obg/CgtA"/>
</dbReference>
<dbReference type="InterPro" id="IPR006074">
    <property type="entry name" value="GTP1-OBG_CS"/>
</dbReference>
<dbReference type="InterPro" id="IPR006169">
    <property type="entry name" value="GTP1_OBG_dom"/>
</dbReference>
<dbReference type="InterPro" id="IPR036726">
    <property type="entry name" value="GTP1_OBG_dom_sf"/>
</dbReference>
<dbReference type="InterPro" id="IPR045086">
    <property type="entry name" value="OBG_GTPase"/>
</dbReference>
<dbReference type="InterPro" id="IPR027417">
    <property type="entry name" value="P-loop_NTPase"/>
</dbReference>
<dbReference type="NCBIfam" id="TIGR02729">
    <property type="entry name" value="Obg_CgtA"/>
    <property type="match status" value="1"/>
</dbReference>
<dbReference type="NCBIfam" id="NF008956">
    <property type="entry name" value="PRK12299.1"/>
    <property type="match status" value="1"/>
</dbReference>
<dbReference type="PANTHER" id="PTHR11702">
    <property type="entry name" value="DEVELOPMENTALLY REGULATED GTP-BINDING PROTEIN-RELATED"/>
    <property type="match status" value="1"/>
</dbReference>
<dbReference type="PANTHER" id="PTHR11702:SF31">
    <property type="entry name" value="MITOCHONDRIAL RIBOSOME-ASSOCIATED GTPASE 2"/>
    <property type="match status" value="1"/>
</dbReference>
<dbReference type="Pfam" id="PF01018">
    <property type="entry name" value="GTP1_OBG"/>
    <property type="match status" value="1"/>
</dbReference>
<dbReference type="Pfam" id="PF01926">
    <property type="entry name" value="MMR_HSR1"/>
    <property type="match status" value="1"/>
</dbReference>
<dbReference type="PIRSF" id="PIRSF002401">
    <property type="entry name" value="GTP_bd_Obg/CgtA"/>
    <property type="match status" value="1"/>
</dbReference>
<dbReference type="PRINTS" id="PR00326">
    <property type="entry name" value="GTP1OBG"/>
</dbReference>
<dbReference type="SUPFAM" id="SSF82051">
    <property type="entry name" value="Obg GTP-binding protein N-terminal domain"/>
    <property type="match status" value="1"/>
</dbReference>
<dbReference type="SUPFAM" id="SSF52540">
    <property type="entry name" value="P-loop containing nucleoside triphosphate hydrolases"/>
    <property type="match status" value="1"/>
</dbReference>
<dbReference type="PROSITE" id="PS51710">
    <property type="entry name" value="G_OBG"/>
    <property type="match status" value="1"/>
</dbReference>
<dbReference type="PROSITE" id="PS00905">
    <property type="entry name" value="GTP1_OBG"/>
    <property type="match status" value="1"/>
</dbReference>
<dbReference type="PROSITE" id="PS51883">
    <property type="entry name" value="OBG"/>
    <property type="match status" value="1"/>
</dbReference>